<proteinExistence type="inferred from homology"/>
<gene>
    <name evidence="1" type="primary">tsaD</name>
    <name type="synonym">gcp</name>
    <name type="ORF">orf99</name>
</gene>
<comment type="function">
    <text evidence="1">Required for the formation of a threonylcarbamoyl group on adenosine at position 37 (t(6)A37) in tRNAs that read codons beginning with adenine. Is involved in the transfer of the threonylcarbamoyl moiety of threonylcarbamoyl-AMP (TC-AMP) to the N6 group of A37, together with TsaE and TsaB. TsaD likely plays a direct catalytic role in this reaction.</text>
</comment>
<comment type="catalytic activity">
    <reaction evidence="1">
        <text>L-threonylcarbamoyladenylate + adenosine(37) in tRNA = N(6)-L-threonylcarbamoyladenosine(37) in tRNA + AMP + H(+)</text>
        <dbReference type="Rhea" id="RHEA:37059"/>
        <dbReference type="Rhea" id="RHEA-COMP:10162"/>
        <dbReference type="Rhea" id="RHEA-COMP:10163"/>
        <dbReference type="ChEBI" id="CHEBI:15378"/>
        <dbReference type="ChEBI" id="CHEBI:73682"/>
        <dbReference type="ChEBI" id="CHEBI:74411"/>
        <dbReference type="ChEBI" id="CHEBI:74418"/>
        <dbReference type="ChEBI" id="CHEBI:456215"/>
        <dbReference type="EC" id="2.3.1.234"/>
    </reaction>
</comment>
<comment type="cofactor">
    <cofactor evidence="1">
        <name>Fe(2+)</name>
        <dbReference type="ChEBI" id="CHEBI:29033"/>
    </cofactor>
    <text evidence="1">Binds 1 Fe(2+) ion per subunit.</text>
</comment>
<comment type="subcellular location">
    <subcellularLocation>
        <location evidence="1">Cytoplasm</location>
    </subcellularLocation>
</comment>
<comment type="similarity">
    <text evidence="1">Belongs to the KAE1 / TsaD family.</text>
</comment>
<accession>Q2VNJ2</accession>
<feature type="chain" id="PRO_0000303425" description="tRNA N6-adenosine threonylcarbamoyltransferase">
    <location>
        <begin position="1"/>
        <end position="352"/>
    </location>
</feature>
<feature type="binding site" evidence="1">
    <location>
        <position position="115"/>
    </location>
    <ligand>
        <name>Fe cation</name>
        <dbReference type="ChEBI" id="CHEBI:24875"/>
    </ligand>
</feature>
<feature type="binding site" evidence="1">
    <location>
        <position position="119"/>
    </location>
    <ligand>
        <name>Fe cation</name>
        <dbReference type="ChEBI" id="CHEBI:24875"/>
    </ligand>
</feature>
<feature type="binding site" evidence="1">
    <location>
        <begin position="137"/>
        <end position="141"/>
    </location>
    <ligand>
        <name>substrate</name>
    </ligand>
</feature>
<feature type="binding site" evidence="1">
    <location>
        <position position="170"/>
    </location>
    <ligand>
        <name>substrate</name>
    </ligand>
</feature>
<feature type="binding site" evidence="1">
    <location>
        <position position="183"/>
    </location>
    <ligand>
        <name>substrate</name>
    </ligand>
</feature>
<feature type="binding site" evidence="1">
    <location>
        <position position="281"/>
    </location>
    <ligand>
        <name>substrate</name>
    </ligand>
</feature>
<feature type="binding site" evidence="1">
    <location>
        <position position="309"/>
    </location>
    <ligand>
        <name>Fe cation</name>
        <dbReference type="ChEBI" id="CHEBI:24875"/>
    </ligand>
</feature>
<dbReference type="EC" id="2.3.1.234" evidence="1"/>
<dbReference type="EMBL" id="CT005238">
    <property type="protein sequence ID" value="CAJ01640.1"/>
    <property type="molecule type" value="Genomic_DNA"/>
</dbReference>
<dbReference type="SMR" id="Q2VNJ2"/>
<dbReference type="GO" id="GO:0005737">
    <property type="term" value="C:cytoplasm"/>
    <property type="evidence" value="ECO:0007669"/>
    <property type="project" value="UniProtKB-SubCell"/>
</dbReference>
<dbReference type="GO" id="GO:0005506">
    <property type="term" value="F:iron ion binding"/>
    <property type="evidence" value="ECO:0007669"/>
    <property type="project" value="UniProtKB-UniRule"/>
</dbReference>
<dbReference type="GO" id="GO:0061711">
    <property type="term" value="F:N(6)-L-threonylcarbamoyladenine synthase activity"/>
    <property type="evidence" value="ECO:0007669"/>
    <property type="project" value="UniProtKB-EC"/>
</dbReference>
<dbReference type="GO" id="GO:0002949">
    <property type="term" value="P:tRNA threonylcarbamoyladenosine modification"/>
    <property type="evidence" value="ECO:0007669"/>
    <property type="project" value="UniProtKB-UniRule"/>
</dbReference>
<dbReference type="CDD" id="cd24133">
    <property type="entry name" value="ASKHA_NBD_TsaD_bac"/>
    <property type="match status" value="1"/>
</dbReference>
<dbReference type="FunFam" id="3.30.420.40:FF:000040">
    <property type="entry name" value="tRNA N6-adenosine threonylcarbamoyltransferase"/>
    <property type="match status" value="1"/>
</dbReference>
<dbReference type="Gene3D" id="3.30.420.40">
    <property type="match status" value="2"/>
</dbReference>
<dbReference type="HAMAP" id="MF_01445">
    <property type="entry name" value="TsaD"/>
    <property type="match status" value="1"/>
</dbReference>
<dbReference type="InterPro" id="IPR043129">
    <property type="entry name" value="ATPase_NBD"/>
</dbReference>
<dbReference type="InterPro" id="IPR000905">
    <property type="entry name" value="Gcp-like_dom"/>
</dbReference>
<dbReference type="InterPro" id="IPR017861">
    <property type="entry name" value="KAE1/TsaD"/>
</dbReference>
<dbReference type="InterPro" id="IPR022450">
    <property type="entry name" value="TsaD"/>
</dbReference>
<dbReference type="NCBIfam" id="TIGR00329">
    <property type="entry name" value="gcp_kae1"/>
    <property type="match status" value="1"/>
</dbReference>
<dbReference type="NCBIfam" id="TIGR03723">
    <property type="entry name" value="T6A_TsaD_YgjD"/>
    <property type="match status" value="1"/>
</dbReference>
<dbReference type="PANTHER" id="PTHR11735">
    <property type="entry name" value="TRNA N6-ADENOSINE THREONYLCARBAMOYLTRANSFERASE"/>
    <property type="match status" value="1"/>
</dbReference>
<dbReference type="PANTHER" id="PTHR11735:SF6">
    <property type="entry name" value="TRNA N6-ADENOSINE THREONYLCARBAMOYLTRANSFERASE, MITOCHONDRIAL"/>
    <property type="match status" value="1"/>
</dbReference>
<dbReference type="Pfam" id="PF00814">
    <property type="entry name" value="TsaD"/>
    <property type="match status" value="1"/>
</dbReference>
<dbReference type="PRINTS" id="PR00789">
    <property type="entry name" value="OSIALOPTASE"/>
</dbReference>
<dbReference type="SUPFAM" id="SSF53067">
    <property type="entry name" value="Actin-like ATPase domain"/>
    <property type="match status" value="2"/>
</dbReference>
<name>TSAD_METAI</name>
<protein>
    <recommendedName>
        <fullName evidence="1">tRNA N6-adenosine threonylcarbamoyltransferase</fullName>
        <ecNumber evidence="1">2.3.1.234</ecNumber>
    </recommendedName>
    <alternativeName>
        <fullName evidence="1">N6-L-threonylcarbamoyladenine synthase</fullName>
        <shortName evidence="1">t(6)A synthase</shortName>
    </alternativeName>
    <alternativeName>
        <fullName evidence="1">t(6)A37 threonylcarbamoyladenosine biosynthesis protein TsaD</fullName>
    </alternativeName>
    <alternativeName>
        <fullName evidence="1">tRNA threonylcarbamoyladenosine biosynthesis protein TsaD</fullName>
    </alternativeName>
</protein>
<keyword id="KW-0012">Acyltransferase</keyword>
<keyword id="KW-0963">Cytoplasm</keyword>
<keyword id="KW-0408">Iron</keyword>
<keyword id="KW-0479">Metal-binding</keyword>
<keyword id="KW-0808">Transferase</keyword>
<keyword id="KW-0819">tRNA processing</keyword>
<reference key="1">
    <citation type="journal article" date="2005" name="Appl. Environ. Microbiol.">
        <title>First genome data from uncultured upland soil cluster alpha methanotrophs provide further evidence for a close phylogenetic relationship to Methylocapsa acidiphila B2 and for high-affinity methanotrophy involving particulate methane monooxygenase.</title>
        <authorList>
            <person name="Ricke P."/>
            <person name="Kube M."/>
            <person name="Nakagawa S."/>
            <person name="Erkel C."/>
            <person name="Reinhardt R."/>
            <person name="Liesack W."/>
        </authorList>
    </citation>
    <scope>NUCLEOTIDE SEQUENCE [GENOMIC DNA]</scope>
    <source>
        <strain>DSM 13967 / NCIMB 13765 / B2</strain>
    </source>
</reference>
<organism>
    <name type="scientific">Methylocapsa acidiphila</name>
    <dbReference type="NCBI Taxonomy" id="133552"/>
    <lineage>
        <taxon>Bacteria</taxon>
        <taxon>Pseudomonadati</taxon>
        <taxon>Pseudomonadota</taxon>
        <taxon>Alphaproteobacteria</taxon>
        <taxon>Hyphomicrobiales</taxon>
        <taxon>Beijerinckiaceae</taxon>
        <taxon>Methylocapsa</taxon>
    </lineage>
</organism>
<evidence type="ECO:0000255" key="1">
    <source>
        <dbReference type="HAMAP-Rule" id="MF_01445"/>
    </source>
</evidence>
<sequence>MRVLGIETTCDETAAAVVRLEPGGAGEILSNEVMSQIAEHAAYGGVVPEIAARAHIDIIDRLVLRALAHAGTRLADLDGIAAAAGPGLIGGVIVGLTTAKALALASRKPFIAVNHLEAHALTARLTDALEFPYLLLLVSGGHTQLVAVRGVGDYLRLGSTVDDAVGEAFDKIAKMLGLPYPGGPEVEKRAAEGNAARFDFPRPMLGRPKPDFSLSGLKTAVRLEMERLNSLSPTDVADLCASFQAAVVDMIIDRSRVGLRLFRETVGPSNAMVVAGGVAANGAIRRALMRFCGESGMRLVLPPPQLCTDNGAMIAWAGLERLSLGLIDDLTFAARARWPLDANAEAVHHGKA</sequence>